<gene>
    <name evidence="7" type="primary">eIK2</name>
    <name evidence="10" type="ORF">PBANKA_0205800</name>
</gene>
<feature type="chain" id="PRO_0000456972" description="Eukaryotic translation initiation factor 2-alpha kinase 2">
    <location>
        <begin position="1"/>
        <end position="2724"/>
    </location>
</feature>
<feature type="topological domain" description="Cytoplasmic" evidence="8">
    <location>
        <begin position="1"/>
        <end position="24"/>
    </location>
</feature>
<feature type="transmembrane region" description="Helical" evidence="2">
    <location>
        <begin position="25"/>
        <end position="45"/>
    </location>
</feature>
<feature type="topological domain" description="Extracellular" evidence="8">
    <location>
        <begin position="46"/>
        <end position="673"/>
    </location>
</feature>
<feature type="transmembrane region" description="Helical" evidence="2">
    <location>
        <begin position="674"/>
        <end position="694"/>
    </location>
</feature>
<feature type="topological domain" description="Cytoplasmic" evidence="8">
    <location>
        <begin position="695"/>
        <end position="718"/>
    </location>
</feature>
<feature type="transmembrane region" description="Helical" evidence="2">
    <location>
        <begin position="719"/>
        <end position="739"/>
    </location>
</feature>
<feature type="topological domain" description="Extracellular" evidence="8">
    <location>
        <begin position="740"/>
        <end position="800"/>
    </location>
</feature>
<feature type="transmembrane region" description="Helical" evidence="2">
    <location>
        <begin position="801"/>
        <end position="821"/>
    </location>
</feature>
<feature type="topological domain" description="Cytoplasmic" evidence="8">
    <location>
        <begin position="822"/>
        <end position="832"/>
    </location>
</feature>
<feature type="transmembrane region" description="Helical" evidence="2">
    <location>
        <begin position="833"/>
        <end position="853"/>
    </location>
</feature>
<feature type="topological domain" description="Extracellular" evidence="8">
    <location>
        <begin position="854"/>
        <end position="876"/>
    </location>
</feature>
<feature type="transmembrane region" description="Helical" evidence="2">
    <location>
        <begin position="877"/>
        <end position="897"/>
    </location>
</feature>
<feature type="topological domain" description="Cytoplasmic" evidence="8">
    <location>
        <begin position="898"/>
        <end position="908"/>
    </location>
</feature>
<feature type="transmembrane region" description="Helical" evidence="2">
    <location>
        <begin position="909"/>
        <end position="929"/>
    </location>
</feature>
<feature type="topological domain" description="Extracellular" evidence="8">
    <location>
        <begin position="930"/>
        <end position="996"/>
    </location>
</feature>
<feature type="transmembrane region" description="Helical" evidence="2">
    <location>
        <begin position="997"/>
        <end position="1017"/>
    </location>
</feature>
<feature type="topological domain" description="Cytoplasmic" evidence="8">
    <location>
        <begin position="1018"/>
        <end position="2724"/>
    </location>
</feature>
<feature type="domain" description="Protein kinase" evidence="3">
    <location>
        <begin position="2084"/>
        <end position="2719"/>
    </location>
</feature>
<feature type="region of interest" description="Disordered" evidence="5">
    <location>
        <begin position="112"/>
        <end position="153"/>
    </location>
</feature>
<feature type="region of interest" description="Disordered" evidence="5">
    <location>
        <begin position="2479"/>
        <end position="2507"/>
    </location>
</feature>
<feature type="coiled-coil region" evidence="2">
    <location>
        <begin position="2120"/>
        <end position="2155"/>
    </location>
</feature>
<feature type="compositionally biased region" description="Basic and acidic residues" evidence="5">
    <location>
        <begin position="120"/>
        <end position="146"/>
    </location>
</feature>
<feature type="compositionally biased region" description="Basic residues" evidence="5">
    <location>
        <begin position="2488"/>
        <end position="2502"/>
    </location>
</feature>
<feature type="active site" description="Proton acceptor" evidence="4">
    <location>
        <position position="2229"/>
    </location>
</feature>
<feature type="binding site" evidence="9">
    <location>
        <position position="2029"/>
    </location>
    <ligand>
        <name>ATP</name>
        <dbReference type="ChEBI" id="CHEBI:30616"/>
    </ligand>
</feature>
<sequence>MLNMVDQKKGINNGSSTGVINNINGKIKNEFIFMYLIAAGGFSCVYKIKKKKSNKFYALKKIKFSANESNYEKKVLLNLREIECLRKLKNHPNIVSMNDFWLEVVQTLSKSKRERRGRRKEQQREQMGDKRREKRQQQRREKRKEQNTNTKKRVLITLSDHKKKKLKHLSCPENALNISNITNNERNVLKKDNWKNLILLKNFKKEKHNYNFNHQIELNKYNIMCLWKILNQMCVCKNEKKNIESLLPEQLIKNFKNFLFEKYILAIYDDCSYLNNKNNKTFIFFNNNLGNILHYLWWSYLGKNGKEKKNDIFKLLKYVSDNIIKDNTNLYNIILEFRHSLIELSRFPSNELGNVILNMRIPPNGSCELSEYISNMAKINKLEIYRNKNTLEKFIFKINCNNFDVYKMWINFKNDIIYEGKDVYKEHRKINLKRKIIKKKDIWIKGKKEKHLKNTIGNKCIKKINIYYEKPIHVFVYKSLTYKRQKHHKLWRKHYNNKKNWKYCLNKHENSKKYILFSKICRLMKTQMNKFKREEKFEKKKKIAITNIKVNYNDFEQDISSFNIQIYNKKNKNQLINRIKEQYEQLSISLNPYKLTYENENILRYNEHNYLFGLKNDNEKENIYNAIYFLNFYIWIRREINEYAIISKKRQICQNSRNYQSKKKFYIKRHNQKTYFFENIIFYHYIIMLFLDIEKYKNKFVSLFQYNLYRKLLKISKRIVLMLHRIETNVICIFLLKHFEDYFIRKGIHIVQDKSDRSNKGDEIGIHKMVKIWKSMIAISLIFGKKMYKKKKNIFNFFIELFLNNIQINIFKKFEILYLIIYFYNYFEKSKQFDIEGIGDIIYVWLSLINLFYDDKGKCIKILSKIFAKLNKKLYYVYWGKLYIIMNWTTIVDTIFIRNVLSINREGNYYWVIIVLKMINYFVNVAYTLTRMDIFFIKVMIKFYTRIGSAAATNSVSKNSYNEIFNNIFTLNFMNYIIYNSYFENEKKNYDIYTKYAILFIYCFIIQAYYFDTLFNIRSLESNEIANNLFPGYNYSYKNILLFYERLGRVIKNSNNTKICKYMWRKFINMWSNSIVIKENIISCLTTSRHIYFNILMNFMKIYCLDNILHIKKKKKKMNTPIVLTSKNDLKKWKDCELTKNPKSVKKGILIKKKNRNNNKKYKKKLKETHFIYNIKKVLFKKLVNINIETILYEQNGQCYILVFGSVIKKKNGQIKVKDTKIVRDINIIRDYRIYFYNYLEYFYKNNAHISDNINLIYARKWPYNNKNAVKQFCPYFDKIKDGNRKDIVSLYGNKILVKQNFSKIGNKIKNKKNNLCKKKMRTQKSIYNSNYWREKKENKLLNGNVNIIKKYKSEKIKKKELENFFDNIVYSSENDDFKIIFENATNSNACSTVDLASPNELNTKRNNINKKLKFFKHKKNSKKQKNYKNHKSHKKIFFKSVNNANRFFVTNVEPNPIMSNNHQIADSNDIYNNFSIQKKYEYNHKNCGNIYNTKDCDENDSSYICFLINEHEGQVLSHRHKELYKNMLGMERGNILYRDNACKLKDDFSCLHDQCDNSMIKACGTNELIKESTKIKRENMDKINKMNEVNQHISLETLKYKCSFKKIDKNLIQNKKKIIIRKICQINKTFYFKYNKINDKKRIYFDSVLCKSERHKTYKKRNENIKVILLKTLKGESNEYVLTTYLTEIYSDNINDPFENSRKKINSNEIFYQKTFDMYCIEDEGEVYEEQKRVNKNNKKKKYINEMIKMDTIRTDFEDNFTNSYNKKCNILKMASNINNKNNSGKKERDIKRQFLITNKKKHENNIKIFYNLFKLEESNVNSNPQTNPYYETVIHDNEDNIFYCLYKYIQQQVYRYCNCDIDEYTSNCIDKNVNKWEWYGFIKENENYDKIKTEINSNSFYNCREKHNICNSYNSVYQLEFRKLGNASKEKNFEEKKKIIKIEFRKSFNNFKLPSLLCILKWDNFFKPHFIIRCDNFLHTYNIYFDFFILLMNLFHKGEGSNLYRFNSNKSIIYNPYLSHQIYMVTKYFISNVHKINNKLPIHLENDILEIYSYNRFLTIPNKCSFKNCGNDNNNYDQRSKKHYFTKCGILNTEKVKPSKKRRIGWDGQRQRKRKDIINTLNEENQNMFCKNKEKKEENYKKIDTNISQFSEKNPVSNIDNEKNKQNFIKNKKYKFNLYIRMEYCKDTIENYINRRTRINIKRNIEIINMIIMGLNYIHNNNIMHRDLKPSNIFISNNDIVKIGDFGLASYDYLDDHKINTTKEEEIQKDLIINKNCDKIFFCNKKKLFSNYNSVFPLENGQISDVHNTKGDYNESSISKSKKFAIQNKNRNLRSCKRIFQWWSTIGELNILSKNRRRLTKFKSGSNTIHIRKSTLDENIIVRHANKCHNLSFSQNREHIDRNRMKKCNIIKNHIIKSNKSEKMNISMNVFLRCTKTRRYFTDEDKSVETRKKCSKTSEEENGNICDTKKKKNDIGEKMDKNKIAAQKKKKKKENKHPIGRRSTNSSISSAIVVKRNAYCRLEIEKYFLSKSFQNCRSNKKKKYINIKTIKNKFCSASNKNFGAKWMRIYRKGLHHDDIQEKSADQTTEQMGGCNKTVASDFSSNLKNKKESINHTLGIGTKLYSAPEQLEGNKYTKSVDIFSLGLIIIDLFIKTETNMERTQILCNARERILPDLLIKKHPNVASLCKKMLSLDYKSRPTSAQLYNKIISAGDIFLPDKCP</sequence>
<comment type="function">
    <text evidence="6">Phosphorylates translation factor eIF2alpha in salivary gland sporozoites during dormancy, which leads to an inhibition of protein translation and accumulation of stalled mRNAs into granules.</text>
</comment>
<comment type="catalytic activity">
    <reaction evidence="9">
        <text>L-seryl-[protein] + ATP = O-phospho-L-seryl-[protein] + ADP + H(+)</text>
        <dbReference type="Rhea" id="RHEA:17989"/>
        <dbReference type="Rhea" id="RHEA-COMP:9863"/>
        <dbReference type="Rhea" id="RHEA-COMP:11604"/>
        <dbReference type="ChEBI" id="CHEBI:15378"/>
        <dbReference type="ChEBI" id="CHEBI:29999"/>
        <dbReference type="ChEBI" id="CHEBI:30616"/>
        <dbReference type="ChEBI" id="CHEBI:83421"/>
        <dbReference type="ChEBI" id="CHEBI:456216"/>
        <dbReference type="EC" id="2.7.11.1"/>
    </reaction>
    <physiologicalReaction direction="left-to-right" evidence="9">
        <dbReference type="Rhea" id="RHEA:17990"/>
    </physiologicalReaction>
</comment>
<comment type="catalytic activity">
    <reaction evidence="8">
        <text>L-threonyl-[protein] + ATP = O-phospho-L-threonyl-[protein] + ADP + H(+)</text>
        <dbReference type="Rhea" id="RHEA:46608"/>
        <dbReference type="Rhea" id="RHEA-COMP:11060"/>
        <dbReference type="Rhea" id="RHEA-COMP:11605"/>
        <dbReference type="ChEBI" id="CHEBI:15378"/>
        <dbReference type="ChEBI" id="CHEBI:30013"/>
        <dbReference type="ChEBI" id="CHEBI:30616"/>
        <dbReference type="ChEBI" id="CHEBI:61977"/>
        <dbReference type="ChEBI" id="CHEBI:456216"/>
        <dbReference type="EC" id="2.7.11.1"/>
    </reaction>
    <physiologicalReaction direction="left-to-right" evidence="8">
        <dbReference type="Rhea" id="RHEA:46609"/>
    </physiologicalReaction>
</comment>
<comment type="subcellular location">
    <subcellularLocation>
        <location evidence="2">Membrane</location>
        <topology evidence="2">Multi-pass membrane protein</topology>
    </subcellularLocation>
</comment>
<comment type="developmental stage">
    <text evidence="6">Expressed in salivary gland sporozoites and to a lesser extend in gametocytes. Not expressed during the midgut and the asexual blood stages.</text>
</comment>
<comment type="PTM">
    <text evidence="1">Auto-phosphorylated.</text>
</comment>
<comment type="disruption phenotype">
    <text evidence="6">Parasite development in the host blood and mosquito vector is normal (PubMed:20584882). Infectivity of the salivary gland sporozoites to mice is severely impaired (PubMed:20584882). Their ability to traverse cells and to glide are impaired; however, their capacity to invade and develop in host hepatocytes is not affected (PubMed:20584882). In sporozoites, eIF2alpha phosphorylation is abolished, protein translation is increased and fewer poly(A) RNA granules are present (PubMed:20584882). This results in premature morphological changes characterized by disruption of the inner membrane complex in the vicinity of the bulbs, cell membrane detachment, and redistribution of organelles (PubMed:20584882).</text>
</comment>
<comment type="similarity">
    <text evidence="8">Belongs to the protein kinase superfamily. Ser/Thr protein kinase family. GCN2 subfamily.</text>
</comment>
<name>EIK2_PLABA</name>
<reference evidence="11" key="1">
    <citation type="journal article" date="2014" name="BMC Biol.">
        <title>A comprehensive evaluation of rodent malaria parasite genomes and gene expression.</title>
        <authorList>
            <person name="Otto T.D."/>
            <person name="Bohme U."/>
            <person name="Jackson A.P."/>
            <person name="Hunt M."/>
            <person name="Franke-Fayard B."/>
            <person name="Hoeijmakers W.A."/>
            <person name="Religa A.A."/>
            <person name="Robertson L."/>
            <person name="Sanders M."/>
            <person name="Ogun S.A."/>
            <person name="Cunningham D."/>
            <person name="Erhart A."/>
            <person name="Billker O."/>
            <person name="Khan S.M."/>
            <person name="Stunnenberg H.G."/>
            <person name="Langhorne J."/>
            <person name="Holder A.A."/>
            <person name="Waters A.P."/>
            <person name="Newbold C.I."/>
            <person name="Pain A."/>
            <person name="Berriman M."/>
            <person name="Janse C.J."/>
        </authorList>
    </citation>
    <scope>NUCLEOTIDE SEQUENCE [LARGE SCALE GENOMIC DNA]</scope>
    <source>
        <strain evidence="11">ANKA</strain>
    </source>
</reference>
<reference evidence="8" key="2">
    <citation type="journal article" date="2010" name="J. Exp. Med.">
        <title>The Plasmodium eukaryotic initiation factor-2alpha kinase IK2 controls the latency of sporozoites in the mosquito salivary glands.</title>
        <authorList>
            <person name="Zhang M."/>
            <person name="Fennell C."/>
            <person name="Ranford-Cartwright L."/>
            <person name="Sakthivel R."/>
            <person name="Gueirard P."/>
            <person name="Meister S."/>
            <person name="Caspi A."/>
            <person name="Doerig C."/>
            <person name="Nussenzweig R.S."/>
            <person name="Tuteja R."/>
            <person name="Sullivan W.J. Jr."/>
            <person name="Roos D.S."/>
            <person name="Fontoura B.M."/>
            <person name="Menard R."/>
            <person name="Winzeler E.A."/>
            <person name="Nussenzweig V."/>
        </authorList>
    </citation>
    <scope>FUNCTION</scope>
    <scope>CATALYTIC ACTIVITY</scope>
    <scope>DEVELOPMENTAL STAGE</scope>
    <scope>DISRUPTION PHENOTYPE</scope>
</reference>
<evidence type="ECO:0000250" key="1">
    <source>
        <dbReference type="UniProtKB" id="Q8I265"/>
    </source>
</evidence>
<evidence type="ECO:0000255" key="2"/>
<evidence type="ECO:0000255" key="3">
    <source>
        <dbReference type="PROSITE-ProRule" id="PRU00159"/>
    </source>
</evidence>
<evidence type="ECO:0000255" key="4">
    <source>
        <dbReference type="PROSITE-ProRule" id="PRU10027"/>
    </source>
</evidence>
<evidence type="ECO:0000256" key="5">
    <source>
        <dbReference type="SAM" id="MobiDB-lite"/>
    </source>
</evidence>
<evidence type="ECO:0000269" key="6">
    <source>
    </source>
</evidence>
<evidence type="ECO:0000303" key="7">
    <source>
    </source>
</evidence>
<evidence type="ECO:0000305" key="8"/>
<evidence type="ECO:0000305" key="9">
    <source>
    </source>
</evidence>
<evidence type="ECO:0000312" key="10">
    <source>
        <dbReference type="EMBL" id="VUC53932.1"/>
    </source>
</evidence>
<evidence type="ECO:0000312" key="11">
    <source>
        <dbReference type="Proteomes" id="UP000074855"/>
    </source>
</evidence>
<dbReference type="EC" id="2.7.11.1" evidence="9"/>
<dbReference type="EMBL" id="LK023117">
    <property type="protein sequence ID" value="VUC53932.1"/>
    <property type="molecule type" value="Genomic_DNA"/>
</dbReference>
<dbReference type="STRING" id="5823.A0A509AH51"/>
<dbReference type="VEuPathDB" id="PlasmoDB:PBANKA_0205800"/>
<dbReference type="InParanoid" id="A0A509AH51"/>
<dbReference type="OMA" id="CELSEYI"/>
<dbReference type="Proteomes" id="UP000074855">
    <property type="component" value="Chromosome 2"/>
</dbReference>
<dbReference type="GO" id="GO:0016020">
    <property type="term" value="C:membrane"/>
    <property type="evidence" value="ECO:0007669"/>
    <property type="project" value="UniProtKB-SubCell"/>
</dbReference>
<dbReference type="GO" id="GO:0005524">
    <property type="term" value="F:ATP binding"/>
    <property type="evidence" value="ECO:0007669"/>
    <property type="project" value="UniProtKB-KW"/>
</dbReference>
<dbReference type="GO" id="GO:0004694">
    <property type="term" value="F:eukaryotic translation initiation factor 2alpha kinase activity"/>
    <property type="evidence" value="ECO:0000315"/>
    <property type="project" value="UniProtKB"/>
</dbReference>
<dbReference type="GO" id="GO:0085015">
    <property type="term" value="P:dormancy maintenance of symbiont in host"/>
    <property type="evidence" value="ECO:0000315"/>
    <property type="project" value="UniProtKB"/>
</dbReference>
<dbReference type="GO" id="GO:0017148">
    <property type="term" value="P:negative regulation of translation"/>
    <property type="evidence" value="ECO:0000315"/>
    <property type="project" value="UniProtKB"/>
</dbReference>
<dbReference type="GO" id="GO:0018105">
    <property type="term" value="P:peptidyl-serine phosphorylation"/>
    <property type="evidence" value="ECO:0000315"/>
    <property type="project" value="UniProtKB"/>
</dbReference>
<dbReference type="GO" id="GO:0010998">
    <property type="term" value="P:regulation of translational initiation by eIF2 alpha phosphorylation"/>
    <property type="evidence" value="ECO:0000315"/>
    <property type="project" value="UniProtKB"/>
</dbReference>
<dbReference type="Gene3D" id="3.30.200.20">
    <property type="entry name" value="Phosphorylase Kinase, domain 1"/>
    <property type="match status" value="1"/>
</dbReference>
<dbReference type="Gene3D" id="1.10.510.10">
    <property type="entry name" value="Transferase(Phosphotransferase) domain 1"/>
    <property type="match status" value="2"/>
</dbReference>
<dbReference type="InterPro" id="IPR011009">
    <property type="entry name" value="Kinase-like_dom_sf"/>
</dbReference>
<dbReference type="InterPro" id="IPR050660">
    <property type="entry name" value="NEK_Ser/Thr_kinase"/>
</dbReference>
<dbReference type="InterPro" id="IPR000719">
    <property type="entry name" value="Prot_kinase_dom"/>
</dbReference>
<dbReference type="InterPro" id="IPR008271">
    <property type="entry name" value="Ser/Thr_kinase_AS"/>
</dbReference>
<dbReference type="PANTHER" id="PTHR43671">
    <property type="entry name" value="SERINE/THREONINE-PROTEIN KINASE NEK"/>
    <property type="match status" value="1"/>
</dbReference>
<dbReference type="PANTHER" id="PTHR43671:SF13">
    <property type="entry name" value="SERINE_THREONINE-PROTEIN KINASE NEK2"/>
    <property type="match status" value="1"/>
</dbReference>
<dbReference type="Pfam" id="PF00069">
    <property type="entry name" value="Pkinase"/>
    <property type="match status" value="3"/>
</dbReference>
<dbReference type="SMART" id="SM00220">
    <property type="entry name" value="S_TKc"/>
    <property type="match status" value="1"/>
</dbReference>
<dbReference type="SUPFAM" id="SSF56112">
    <property type="entry name" value="Protein kinase-like (PK-like)"/>
    <property type="match status" value="2"/>
</dbReference>
<dbReference type="PROSITE" id="PS50011">
    <property type="entry name" value="PROTEIN_KINASE_DOM"/>
    <property type="match status" value="1"/>
</dbReference>
<dbReference type="PROSITE" id="PS00108">
    <property type="entry name" value="PROTEIN_KINASE_ST"/>
    <property type="match status" value="1"/>
</dbReference>
<keyword id="KW-0067">ATP-binding</keyword>
<keyword id="KW-0175">Coiled coil</keyword>
<keyword id="KW-0418">Kinase</keyword>
<keyword id="KW-0472">Membrane</keyword>
<keyword id="KW-0547">Nucleotide-binding</keyword>
<keyword id="KW-0597">Phosphoprotein</keyword>
<keyword id="KW-0652">Protein synthesis inhibitor</keyword>
<keyword id="KW-1185">Reference proteome</keyword>
<keyword id="KW-0723">Serine/threonine-protein kinase</keyword>
<keyword id="KW-0808">Transferase</keyword>
<keyword id="KW-0812">Transmembrane</keyword>
<keyword id="KW-1133">Transmembrane helix</keyword>
<proteinExistence type="evidence at protein level"/>
<organism evidence="11">
    <name type="scientific">Plasmodium berghei (strain Anka)</name>
    <dbReference type="NCBI Taxonomy" id="5823"/>
    <lineage>
        <taxon>Eukaryota</taxon>
        <taxon>Sar</taxon>
        <taxon>Alveolata</taxon>
        <taxon>Apicomplexa</taxon>
        <taxon>Aconoidasida</taxon>
        <taxon>Haemosporida</taxon>
        <taxon>Plasmodiidae</taxon>
        <taxon>Plasmodium</taxon>
        <taxon>Plasmodium (Vinckeia)</taxon>
    </lineage>
</organism>
<protein>
    <recommendedName>
        <fullName evidence="7">Eukaryotic translation initiation factor 2-alpha kinase 2</fullName>
        <shortName evidence="7">PbeIK2</shortName>
        <shortName evidence="7">eIF2alpha kinase 2</shortName>
        <ecNumber evidence="9">2.7.11.1</ecNumber>
    </recommendedName>
</protein>
<accession>A0A509AH51</accession>